<feature type="chain" id="PRO_0000335235" description="DNA mismatch repair protein MutS">
    <location>
        <begin position="1"/>
        <end position="910"/>
    </location>
</feature>
<feature type="region of interest" description="Disordered" evidence="2">
    <location>
        <begin position="1"/>
        <end position="94"/>
    </location>
</feature>
<feature type="compositionally biased region" description="Polar residues" evidence="2">
    <location>
        <begin position="1"/>
        <end position="15"/>
    </location>
</feature>
<feature type="compositionally biased region" description="Low complexity" evidence="2">
    <location>
        <begin position="44"/>
        <end position="54"/>
    </location>
</feature>
<feature type="binding site" evidence="1">
    <location>
        <begin position="726"/>
        <end position="733"/>
    </location>
    <ligand>
        <name>ATP</name>
        <dbReference type="ChEBI" id="CHEBI:30616"/>
    </ligand>
</feature>
<organism>
    <name type="scientific">Synechococcus sp. (strain WH7803)</name>
    <dbReference type="NCBI Taxonomy" id="32051"/>
    <lineage>
        <taxon>Bacteria</taxon>
        <taxon>Bacillati</taxon>
        <taxon>Cyanobacteriota</taxon>
        <taxon>Cyanophyceae</taxon>
        <taxon>Synechococcales</taxon>
        <taxon>Synechococcaceae</taxon>
        <taxon>Synechococcus</taxon>
    </lineage>
</organism>
<sequence length="910" mass="98691">MPRSAAQSEEQTLQGSLFGAPEPAEPAKGRSSQPANPELEDLTDASLSADAAARPRQRQQRGESNDPSADATAEACDGDDASSDEPAWAHHSQVDPAQLTPMLRHYVELKAEHPERVLLYRLGDFFECFFEDAVELSRVLELTLTGKEGGKAIGRVPMAGIPHHAAERYCAELIRRGYSVALCDQLETTPAKGALLKRGITRVLTPGTVLEEGMLSARRNNWLAAVVVEPATSKTPLRWGLASADVSTGDVRVMERTGSDGLHQQLAQLDASELLWAGDGDSGEAARPTWCPERLRLSPMARTPFSAPQAEQTLKTHYQLASLDGLGLPELPLALRAFGGLLQYVNDTQPLEEDARVPLDVPAIVHSGEALVLDAQTRRNLELTATQRDGQLQGSLLWAIDQTLTAMGGRCLRRWLEAPLMNLSAIQQRQAVVSLLVSGRPLRQALRRLLRPMGDLERLAGRAGAGHAGARDLVAIADGLERLPQLASRLQSSLEQWPNELTALQQPEPALAELAASIRQTLIDAPPLSLSEGGLIHDGVDPLLDGLRNQLDDQDAWLAEQERLERERSGNNNLRLQYHRTFGYFLAVSKAKASSVPEHWIRRQTLANEERFITPELKEREGRIFQLRARACQREYELYCSLREQVGAMAAPIRAAARGIACLDALSGLADTAATGGWCAPLLNDSRQLEIVAGRHPVVEQLLVETSFTPNDLNLGSGTDLIVLTGPNASGKSCYLRQIGLIQLLAQIGSWVPATSARVGLADRIFTRVGAVDDLAAGQSTFMVEMAETANILHHASARSLVLLDEIGRGTATFDGLSIAWAVSEHLAGDLKARTVFATHYHELNNLAGERANVANFQVMVEETGADLVFLHQVQCGGASRSYGIEAARLAGVPTPVVQRARQVLDQLAA</sequence>
<comment type="function">
    <text evidence="1">This protein is involved in the repair of mismatches in DNA. It is possible that it carries out the mismatch recognition step. This protein has a weak ATPase activity.</text>
</comment>
<comment type="similarity">
    <text evidence="1">Belongs to the DNA mismatch repair MutS family.</text>
</comment>
<name>MUTS_SYNPW</name>
<evidence type="ECO:0000255" key="1">
    <source>
        <dbReference type="HAMAP-Rule" id="MF_00096"/>
    </source>
</evidence>
<evidence type="ECO:0000256" key="2">
    <source>
        <dbReference type="SAM" id="MobiDB-lite"/>
    </source>
</evidence>
<proteinExistence type="inferred from homology"/>
<accession>A5GHU5</accession>
<protein>
    <recommendedName>
        <fullName evidence="1">DNA mismatch repair protein MutS</fullName>
    </recommendedName>
</protein>
<dbReference type="EMBL" id="CT971583">
    <property type="protein sequence ID" value="CAK22510.1"/>
    <property type="molecule type" value="Genomic_DNA"/>
</dbReference>
<dbReference type="SMR" id="A5GHU5"/>
<dbReference type="STRING" id="32051.SynWH7803_0084"/>
<dbReference type="KEGG" id="syx:SynWH7803_0084"/>
<dbReference type="eggNOG" id="COG0249">
    <property type="taxonomic scope" value="Bacteria"/>
</dbReference>
<dbReference type="HOGENOM" id="CLU_002472_3_1_3"/>
<dbReference type="OrthoDB" id="9802448at2"/>
<dbReference type="Proteomes" id="UP000001566">
    <property type="component" value="Chromosome"/>
</dbReference>
<dbReference type="GO" id="GO:0005829">
    <property type="term" value="C:cytosol"/>
    <property type="evidence" value="ECO:0007669"/>
    <property type="project" value="TreeGrafter"/>
</dbReference>
<dbReference type="GO" id="GO:0005524">
    <property type="term" value="F:ATP binding"/>
    <property type="evidence" value="ECO:0007669"/>
    <property type="project" value="UniProtKB-UniRule"/>
</dbReference>
<dbReference type="GO" id="GO:0140664">
    <property type="term" value="F:ATP-dependent DNA damage sensor activity"/>
    <property type="evidence" value="ECO:0007669"/>
    <property type="project" value="InterPro"/>
</dbReference>
<dbReference type="GO" id="GO:0003684">
    <property type="term" value="F:damaged DNA binding"/>
    <property type="evidence" value="ECO:0007669"/>
    <property type="project" value="UniProtKB-UniRule"/>
</dbReference>
<dbReference type="GO" id="GO:0030983">
    <property type="term" value="F:mismatched DNA binding"/>
    <property type="evidence" value="ECO:0007669"/>
    <property type="project" value="InterPro"/>
</dbReference>
<dbReference type="GO" id="GO:0006298">
    <property type="term" value="P:mismatch repair"/>
    <property type="evidence" value="ECO:0007669"/>
    <property type="project" value="UniProtKB-UniRule"/>
</dbReference>
<dbReference type="CDD" id="cd03284">
    <property type="entry name" value="ABC_MutS1"/>
    <property type="match status" value="1"/>
</dbReference>
<dbReference type="FunFam" id="1.10.1420.10:FF:000001">
    <property type="entry name" value="DNA mismatch repair protein MutS"/>
    <property type="match status" value="1"/>
</dbReference>
<dbReference type="FunFam" id="3.40.50.300:FF:000870">
    <property type="entry name" value="MutS protein homolog 4"/>
    <property type="match status" value="1"/>
</dbReference>
<dbReference type="Gene3D" id="1.10.1420.10">
    <property type="match status" value="2"/>
</dbReference>
<dbReference type="Gene3D" id="3.40.1170.10">
    <property type="entry name" value="DNA repair protein MutS, domain I"/>
    <property type="match status" value="1"/>
</dbReference>
<dbReference type="Gene3D" id="3.30.420.110">
    <property type="entry name" value="MutS, connector domain"/>
    <property type="match status" value="1"/>
</dbReference>
<dbReference type="Gene3D" id="3.40.50.300">
    <property type="entry name" value="P-loop containing nucleotide triphosphate hydrolases"/>
    <property type="match status" value="1"/>
</dbReference>
<dbReference type="HAMAP" id="MF_00096">
    <property type="entry name" value="MutS"/>
    <property type="match status" value="1"/>
</dbReference>
<dbReference type="InterPro" id="IPR005748">
    <property type="entry name" value="DNA_mismatch_repair_MutS"/>
</dbReference>
<dbReference type="InterPro" id="IPR007695">
    <property type="entry name" value="DNA_mismatch_repair_MutS-lik_N"/>
</dbReference>
<dbReference type="InterPro" id="IPR017261">
    <property type="entry name" value="DNA_mismatch_repair_MutS/MSH"/>
</dbReference>
<dbReference type="InterPro" id="IPR000432">
    <property type="entry name" value="DNA_mismatch_repair_MutS_C"/>
</dbReference>
<dbReference type="InterPro" id="IPR007861">
    <property type="entry name" value="DNA_mismatch_repair_MutS_clamp"/>
</dbReference>
<dbReference type="InterPro" id="IPR007696">
    <property type="entry name" value="DNA_mismatch_repair_MutS_core"/>
</dbReference>
<dbReference type="InterPro" id="IPR016151">
    <property type="entry name" value="DNA_mismatch_repair_MutS_N"/>
</dbReference>
<dbReference type="InterPro" id="IPR036187">
    <property type="entry name" value="DNA_mismatch_repair_MutS_sf"/>
</dbReference>
<dbReference type="InterPro" id="IPR007860">
    <property type="entry name" value="DNA_mmatch_repair_MutS_con_dom"/>
</dbReference>
<dbReference type="InterPro" id="IPR045076">
    <property type="entry name" value="MutS"/>
</dbReference>
<dbReference type="InterPro" id="IPR036678">
    <property type="entry name" value="MutS_con_dom_sf"/>
</dbReference>
<dbReference type="InterPro" id="IPR027417">
    <property type="entry name" value="P-loop_NTPase"/>
</dbReference>
<dbReference type="NCBIfam" id="TIGR01070">
    <property type="entry name" value="mutS1"/>
    <property type="match status" value="1"/>
</dbReference>
<dbReference type="NCBIfam" id="NF003810">
    <property type="entry name" value="PRK05399.1"/>
    <property type="match status" value="1"/>
</dbReference>
<dbReference type="PANTHER" id="PTHR11361:SF34">
    <property type="entry name" value="DNA MISMATCH REPAIR PROTEIN MSH1, MITOCHONDRIAL"/>
    <property type="match status" value="1"/>
</dbReference>
<dbReference type="PANTHER" id="PTHR11361">
    <property type="entry name" value="DNA MISMATCH REPAIR PROTEIN MUTS FAMILY MEMBER"/>
    <property type="match status" value="1"/>
</dbReference>
<dbReference type="Pfam" id="PF01624">
    <property type="entry name" value="MutS_I"/>
    <property type="match status" value="1"/>
</dbReference>
<dbReference type="Pfam" id="PF05188">
    <property type="entry name" value="MutS_II"/>
    <property type="match status" value="1"/>
</dbReference>
<dbReference type="Pfam" id="PF05192">
    <property type="entry name" value="MutS_III"/>
    <property type="match status" value="1"/>
</dbReference>
<dbReference type="Pfam" id="PF05190">
    <property type="entry name" value="MutS_IV"/>
    <property type="match status" value="1"/>
</dbReference>
<dbReference type="Pfam" id="PF00488">
    <property type="entry name" value="MutS_V"/>
    <property type="match status" value="1"/>
</dbReference>
<dbReference type="PIRSF" id="PIRSF037677">
    <property type="entry name" value="DNA_mis_repair_Msh6"/>
    <property type="match status" value="1"/>
</dbReference>
<dbReference type="SMART" id="SM00534">
    <property type="entry name" value="MUTSac"/>
    <property type="match status" value="1"/>
</dbReference>
<dbReference type="SMART" id="SM00533">
    <property type="entry name" value="MUTSd"/>
    <property type="match status" value="1"/>
</dbReference>
<dbReference type="SUPFAM" id="SSF55271">
    <property type="entry name" value="DNA repair protein MutS, domain I"/>
    <property type="match status" value="1"/>
</dbReference>
<dbReference type="SUPFAM" id="SSF53150">
    <property type="entry name" value="DNA repair protein MutS, domain II"/>
    <property type="match status" value="1"/>
</dbReference>
<dbReference type="SUPFAM" id="SSF48334">
    <property type="entry name" value="DNA repair protein MutS, domain III"/>
    <property type="match status" value="1"/>
</dbReference>
<dbReference type="SUPFAM" id="SSF52540">
    <property type="entry name" value="P-loop containing nucleoside triphosphate hydrolases"/>
    <property type="match status" value="1"/>
</dbReference>
<dbReference type="PROSITE" id="PS00486">
    <property type="entry name" value="DNA_MISMATCH_REPAIR_2"/>
    <property type="match status" value="1"/>
</dbReference>
<gene>
    <name evidence="1" type="primary">mutS</name>
    <name type="ordered locus">SynWH7803_0084</name>
</gene>
<reference key="1">
    <citation type="submission" date="2006-05" db="EMBL/GenBank/DDBJ databases">
        <authorList>
            <consortium name="Genoscope"/>
        </authorList>
    </citation>
    <scope>NUCLEOTIDE SEQUENCE [LARGE SCALE GENOMIC DNA]</scope>
    <source>
        <strain>WH7803</strain>
    </source>
</reference>
<keyword id="KW-0067">ATP-binding</keyword>
<keyword id="KW-0227">DNA damage</keyword>
<keyword id="KW-0234">DNA repair</keyword>
<keyword id="KW-0238">DNA-binding</keyword>
<keyword id="KW-0547">Nucleotide-binding</keyword>
<keyword id="KW-1185">Reference proteome</keyword>